<organism>
    <name type="scientific">Nitrosopumilus maritimus (strain SCM1)</name>
    <dbReference type="NCBI Taxonomy" id="436308"/>
    <lineage>
        <taxon>Archaea</taxon>
        <taxon>Nitrososphaerota</taxon>
        <taxon>Nitrososphaeria</taxon>
        <taxon>Nitrosopumilales</taxon>
        <taxon>Nitrosopumilaceae</taxon>
        <taxon>Nitrosopumilus</taxon>
    </lineage>
</organism>
<proteinExistence type="inferred from homology"/>
<accession>A9A624</accession>
<dbReference type="EC" id="2.1.1.206" evidence="1"/>
<dbReference type="EMBL" id="CP000866">
    <property type="protein sequence ID" value="ABX13502.1"/>
    <property type="molecule type" value="Genomic_DNA"/>
</dbReference>
<dbReference type="RefSeq" id="WP_012215989.1">
    <property type="nucleotide sequence ID" value="NC_010085.1"/>
</dbReference>
<dbReference type="SMR" id="A9A624"/>
<dbReference type="STRING" id="436308.Nmar_1606"/>
<dbReference type="EnsemblBacteria" id="ABX13502">
    <property type="protein sequence ID" value="ABX13502"/>
    <property type="gene ID" value="Nmar_1606"/>
</dbReference>
<dbReference type="GeneID" id="5772960"/>
<dbReference type="KEGG" id="nmr:Nmar_1606"/>
<dbReference type="eggNOG" id="arCOG01857">
    <property type="taxonomic scope" value="Archaea"/>
</dbReference>
<dbReference type="HOGENOM" id="CLU_123709_0_0_2"/>
<dbReference type="InParanoid" id="A9A624"/>
<dbReference type="OrthoDB" id="14397at2157"/>
<dbReference type="PhylomeDB" id="A9A624"/>
<dbReference type="Proteomes" id="UP000000792">
    <property type="component" value="Chromosome"/>
</dbReference>
<dbReference type="GO" id="GO:0005737">
    <property type="term" value="C:cytoplasm"/>
    <property type="evidence" value="ECO:0007669"/>
    <property type="project" value="UniProtKB-SubCell"/>
</dbReference>
<dbReference type="GO" id="GO:0106059">
    <property type="term" value="F:tRNA (cytidine(56)-2'-O)-methyltransferase activity"/>
    <property type="evidence" value="ECO:0007669"/>
    <property type="project" value="UniProtKB-EC"/>
</dbReference>
<dbReference type="GO" id="GO:0002128">
    <property type="term" value="P:tRNA nucleoside ribose methylation"/>
    <property type="evidence" value="ECO:0007669"/>
    <property type="project" value="UniProtKB-UniRule"/>
</dbReference>
<dbReference type="CDD" id="cd18083">
    <property type="entry name" value="aTrm56-like"/>
    <property type="match status" value="1"/>
</dbReference>
<dbReference type="Gene3D" id="3.40.1280.10">
    <property type="match status" value="1"/>
</dbReference>
<dbReference type="HAMAP" id="MF_00077">
    <property type="entry name" value="tRNA_methyltr_aTrm56"/>
    <property type="match status" value="1"/>
</dbReference>
<dbReference type="InterPro" id="IPR029028">
    <property type="entry name" value="Alpha/beta_knot_MTases"/>
</dbReference>
<dbReference type="InterPro" id="IPR029026">
    <property type="entry name" value="tRNA_m1G_MTases_N"/>
</dbReference>
<dbReference type="InterPro" id="IPR002845">
    <property type="entry name" value="tRNA_mtfrase_aTrm56"/>
</dbReference>
<dbReference type="PANTHER" id="PTHR42197">
    <property type="entry name" value="TRNA (CYTIDINE(56)-2'-O)-METHYLTRANSFERASE"/>
    <property type="match status" value="1"/>
</dbReference>
<dbReference type="PANTHER" id="PTHR42197:SF1">
    <property type="entry name" value="TRNA (CYTIDINE(56)-2'-O)-METHYLTRANSFERASE"/>
    <property type="match status" value="1"/>
</dbReference>
<dbReference type="Pfam" id="PF01994">
    <property type="entry name" value="Trm56"/>
    <property type="match status" value="1"/>
</dbReference>
<dbReference type="PIRSF" id="PIRSF016123">
    <property type="entry name" value="UCP016123"/>
    <property type="match status" value="1"/>
</dbReference>
<dbReference type="SUPFAM" id="SSF75217">
    <property type="entry name" value="alpha/beta knot"/>
    <property type="match status" value="1"/>
</dbReference>
<comment type="function">
    <text evidence="1">Specifically catalyzes the AdoMet-dependent 2'-O-ribose methylation of cytidine at position 56 in tRNAs.</text>
</comment>
<comment type="catalytic activity">
    <reaction evidence="1">
        <text>cytidine(56) in tRNA + S-adenosyl-L-methionine = 2'-O-methylcytidine(56) in tRNA + S-adenosyl-L-homocysteine + H(+)</text>
        <dbReference type="Rhea" id="RHEA:42968"/>
        <dbReference type="Rhea" id="RHEA-COMP:10308"/>
        <dbReference type="Rhea" id="RHEA-COMP:10309"/>
        <dbReference type="ChEBI" id="CHEBI:15378"/>
        <dbReference type="ChEBI" id="CHEBI:57856"/>
        <dbReference type="ChEBI" id="CHEBI:59789"/>
        <dbReference type="ChEBI" id="CHEBI:74495"/>
        <dbReference type="ChEBI" id="CHEBI:82748"/>
        <dbReference type="EC" id="2.1.1.206"/>
    </reaction>
</comment>
<comment type="subunit">
    <text evidence="1">Homodimer.</text>
</comment>
<comment type="subcellular location">
    <subcellularLocation>
        <location evidence="1">Cytoplasm</location>
    </subcellularLocation>
</comment>
<comment type="similarity">
    <text evidence="1">Belongs to the aTrm56 family.</text>
</comment>
<gene>
    <name type="ordered locus">Nmar_1606</name>
</gene>
<feature type="chain" id="PRO_0000365318" description="tRNA (cytidine(56)-2'-O)-methyltransferase">
    <location>
        <begin position="1"/>
        <end position="177"/>
    </location>
</feature>
<feature type="binding site" evidence="1">
    <location>
        <position position="83"/>
    </location>
    <ligand>
        <name>S-adenosyl-L-methionine</name>
        <dbReference type="ChEBI" id="CHEBI:59789"/>
    </ligand>
</feature>
<feature type="binding site" evidence="1">
    <location>
        <begin position="108"/>
        <end position="112"/>
    </location>
    <ligand>
        <name>S-adenosyl-L-methionine</name>
        <dbReference type="ChEBI" id="CHEBI:59789"/>
    </ligand>
</feature>
<evidence type="ECO:0000255" key="1">
    <source>
        <dbReference type="HAMAP-Rule" id="MF_00077"/>
    </source>
</evidence>
<name>TRM56_NITMS</name>
<reference key="1">
    <citation type="journal article" date="2010" name="Proc. Natl. Acad. Sci. U.S.A.">
        <title>Nitrosopumilus maritimus genome reveals unique mechanisms for nitrification and autotrophy in globally distributed marine crenarchaea.</title>
        <authorList>
            <person name="Walker C.B."/>
            <person name="de la Torre J.R."/>
            <person name="Klotz M.G."/>
            <person name="Urakawa H."/>
            <person name="Pinel N."/>
            <person name="Arp D.J."/>
            <person name="Brochier-Armanet C."/>
            <person name="Chain P.S."/>
            <person name="Chan P.P."/>
            <person name="Gollabgir A."/>
            <person name="Hemp J."/>
            <person name="Hugler M."/>
            <person name="Karr E.A."/>
            <person name="Konneke M."/>
            <person name="Shin M."/>
            <person name="Lawton T.J."/>
            <person name="Lowe T."/>
            <person name="Martens-Habbena W."/>
            <person name="Sayavedra-Soto L.A."/>
            <person name="Lang D."/>
            <person name="Sievert S.M."/>
            <person name="Rosenzweig A.C."/>
            <person name="Manning G."/>
            <person name="Stahl D.A."/>
        </authorList>
    </citation>
    <scope>NUCLEOTIDE SEQUENCE [LARGE SCALE GENOMIC DNA]</scope>
    <source>
        <strain>SCM1</strain>
    </source>
</reference>
<protein>
    <recommendedName>
        <fullName evidence="1">tRNA (cytidine(56)-2'-O)-methyltransferase</fullName>
        <ecNumber evidence="1">2.1.1.206</ecNumber>
    </recommendedName>
    <alternativeName>
        <fullName evidence="1">tRNA ribose 2'-O-methyltransferase aTrm56</fullName>
    </alternativeName>
</protein>
<sequence length="177" mass="20187">MVIEVVRIGQRLVRDDRVTTHVALVSRAFGAERIFMTEINPEIKDTLGKINDTWGGNFEIEFIDSWKPIVKKKKEEGFKIVHLSMYGEKINDAQEEIRKEENLLIVVGAEKVPREIYELADFNVGVGSQPHSEISALAILLDRIQGGQQFEKEFPNAKRKIIPTKTGKNVQVKETRD</sequence>
<keyword id="KW-0963">Cytoplasm</keyword>
<keyword id="KW-0489">Methyltransferase</keyword>
<keyword id="KW-1185">Reference proteome</keyword>
<keyword id="KW-0949">S-adenosyl-L-methionine</keyword>
<keyword id="KW-0808">Transferase</keyword>
<keyword id="KW-0819">tRNA processing</keyword>